<gene>
    <name evidence="1" type="primary">hisE</name>
    <name type="ordered locus">KRH_11730</name>
</gene>
<sequence length="87" mass="9605">MKTFEDLFAELSAKAARRPEGSKTVAELDAGVHGIGKKVVEEAAEVWMACEYESDAEAAEEISQLLYHVQVMMIAKGMSLEDVYTHL</sequence>
<proteinExistence type="inferred from homology"/>
<name>HIS2_KOCRD</name>
<accession>B2GGU7</accession>
<reference key="1">
    <citation type="journal article" date="2008" name="J. Bacteriol.">
        <title>Complete genome sequence of the soil actinomycete Kocuria rhizophila.</title>
        <authorList>
            <person name="Takarada H."/>
            <person name="Sekine M."/>
            <person name="Kosugi H."/>
            <person name="Matsuo Y."/>
            <person name="Fujisawa T."/>
            <person name="Omata S."/>
            <person name="Kishi E."/>
            <person name="Shimizu A."/>
            <person name="Tsukatani N."/>
            <person name="Tanikawa S."/>
            <person name="Fujita N."/>
            <person name="Harayama S."/>
        </authorList>
    </citation>
    <scope>NUCLEOTIDE SEQUENCE [LARGE SCALE GENOMIC DNA]</scope>
    <source>
        <strain>ATCC 9341 / DSM 348 / NBRC 103217 / DC2201</strain>
    </source>
</reference>
<feature type="chain" id="PRO_1000190376" description="Phosphoribosyl-ATP pyrophosphatase">
    <location>
        <begin position="1"/>
        <end position="87"/>
    </location>
</feature>
<protein>
    <recommendedName>
        <fullName evidence="1">Phosphoribosyl-ATP pyrophosphatase</fullName>
        <shortName evidence="1">PRA-PH</shortName>
        <ecNumber evidence="1">3.6.1.31</ecNumber>
    </recommendedName>
</protein>
<evidence type="ECO:0000255" key="1">
    <source>
        <dbReference type="HAMAP-Rule" id="MF_01020"/>
    </source>
</evidence>
<comment type="catalytic activity">
    <reaction evidence="1">
        <text>1-(5-phospho-beta-D-ribosyl)-ATP + H2O = 1-(5-phospho-beta-D-ribosyl)-5'-AMP + diphosphate + H(+)</text>
        <dbReference type="Rhea" id="RHEA:22828"/>
        <dbReference type="ChEBI" id="CHEBI:15377"/>
        <dbReference type="ChEBI" id="CHEBI:15378"/>
        <dbReference type="ChEBI" id="CHEBI:33019"/>
        <dbReference type="ChEBI" id="CHEBI:59457"/>
        <dbReference type="ChEBI" id="CHEBI:73183"/>
        <dbReference type="EC" id="3.6.1.31"/>
    </reaction>
</comment>
<comment type="pathway">
    <text evidence="1">Amino-acid biosynthesis; L-histidine biosynthesis; L-histidine from 5-phospho-alpha-D-ribose 1-diphosphate: step 2/9.</text>
</comment>
<comment type="subcellular location">
    <subcellularLocation>
        <location evidence="1">Cytoplasm</location>
    </subcellularLocation>
</comment>
<comment type="similarity">
    <text evidence="1">Belongs to the PRA-PH family.</text>
</comment>
<organism>
    <name type="scientific">Kocuria rhizophila (strain ATCC 9341 / DSM 348 / NBRC 103217 / DC2201)</name>
    <dbReference type="NCBI Taxonomy" id="378753"/>
    <lineage>
        <taxon>Bacteria</taxon>
        <taxon>Bacillati</taxon>
        <taxon>Actinomycetota</taxon>
        <taxon>Actinomycetes</taxon>
        <taxon>Micrococcales</taxon>
        <taxon>Micrococcaceae</taxon>
        <taxon>Kocuria</taxon>
    </lineage>
</organism>
<dbReference type="EC" id="3.6.1.31" evidence="1"/>
<dbReference type="EMBL" id="AP009152">
    <property type="protein sequence ID" value="BAG29520.1"/>
    <property type="molecule type" value="Genomic_DNA"/>
</dbReference>
<dbReference type="RefSeq" id="WP_012398241.1">
    <property type="nucleotide sequence ID" value="NC_010617.1"/>
</dbReference>
<dbReference type="SMR" id="B2GGU7"/>
<dbReference type="STRING" id="378753.KRH_11730"/>
<dbReference type="KEGG" id="krh:KRH_11730"/>
<dbReference type="eggNOG" id="COG0140">
    <property type="taxonomic scope" value="Bacteria"/>
</dbReference>
<dbReference type="HOGENOM" id="CLU_123337_2_1_11"/>
<dbReference type="OrthoDB" id="3212875at2"/>
<dbReference type="UniPathway" id="UPA00031">
    <property type="reaction ID" value="UER00007"/>
</dbReference>
<dbReference type="Proteomes" id="UP000008838">
    <property type="component" value="Chromosome"/>
</dbReference>
<dbReference type="GO" id="GO:0005737">
    <property type="term" value="C:cytoplasm"/>
    <property type="evidence" value="ECO:0007669"/>
    <property type="project" value="UniProtKB-SubCell"/>
</dbReference>
<dbReference type="GO" id="GO:0005524">
    <property type="term" value="F:ATP binding"/>
    <property type="evidence" value="ECO:0007669"/>
    <property type="project" value="UniProtKB-KW"/>
</dbReference>
<dbReference type="GO" id="GO:0004636">
    <property type="term" value="F:phosphoribosyl-ATP diphosphatase activity"/>
    <property type="evidence" value="ECO:0007669"/>
    <property type="project" value="UniProtKB-UniRule"/>
</dbReference>
<dbReference type="GO" id="GO:0000105">
    <property type="term" value="P:L-histidine biosynthetic process"/>
    <property type="evidence" value="ECO:0007669"/>
    <property type="project" value="UniProtKB-UniRule"/>
</dbReference>
<dbReference type="CDD" id="cd11547">
    <property type="entry name" value="NTP-PPase_HisE"/>
    <property type="match status" value="1"/>
</dbReference>
<dbReference type="Gene3D" id="1.10.287.1080">
    <property type="entry name" value="MazG-like"/>
    <property type="match status" value="1"/>
</dbReference>
<dbReference type="HAMAP" id="MF_01020">
    <property type="entry name" value="HisE"/>
    <property type="match status" value="1"/>
</dbReference>
<dbReference type="InterPro" id="IPR008179">
    <property type="entry name" value="HisE"/>
</dbReference>
<dbReference type="InterPro" id="IPR021130">
    <property type="entry name" value="PRib-ATP_PPHydrolase-like"/>
</dbReference>
<dbReference type="NCBIfam" id="TIGR03188">
    <property type="entry name" value="histidine_hisI"/>
    <property type="match status" value="1"/>
</dbReference>
<dbReference type="NCBIfam" id="NF001610">
    <property type="entry name" value="PRK00400.1-1"/>
    <property type="match status" value="1"/>
</dbReference>
<dbReference type="PANTHER" id="PTHR42945">
    <property type="entry name" value="HISTIDINE BIOSYNTHESIS BIFUNCTIONAL PROTEIN"/>
    <property type="match status" value="1"/>
</dbReference>
<dbReference type="PANTHER" id="PTHR42945:SF1">
    <property type="entry name" value="HISTIDINE BIOSYNTHESIS BIFUNCTIONAL PROTEIN HIS7"/>
    <property type="match status" value="1"/>
</dbReference>
<dbReference type="Pfam" id="PF01503">
    <property type="entry name" value="PRA-PH"/>
    <property type="match status" value="1"/>
</dbReference>
<dbReference type="SUPFAM" id="SSF101386">
    <property type="entry name" value="all-alpha NTP pyrophosphatases"/>
    <property type="match status" value="1"/>
</dbReference>
<keyword id="KW-0028">Amino-acid biosynthesis</keyword>
<keyword id="KW-0067">ATP-binding</keyword>
<keyword id="KW-0963">Cytoplasm</keyword>
<keyword id="KW-0368">Histidine biosynthesis</keyword>
<keyword id="KW-0378">Hydrolase</keyword>
<keyword id="KW-0547">Nucleotide-binding</keyword>
<keyword id="KW-1185">Reference proteome</keyword>